<accession>Q8K9M2</accession>
<protein>
    <recommendedName>
        <fullName evidence="1">Glucose-6-phosphate 1-dehydrogenase</fullName>
        <shortName evidence="1">G6PD</shortName>
        <ecNumber evidence="1">1.1.1.49</ecNumber>
    </recommendedName>
</protein>
<name>G6PD_BUCAP</name>
<organism>
    <name type="scientific">Buchnera aphidicola subsp. Schizaphis graminum (strain Sg)</name>
    <dbReference type="NCBI Taxonomy" id="198804"/>
    <lineage>
        <taxon>Bacteria</taxon>
        <taxon>Pseudomonadati</taxon>
        <taxon>Pseudomonadota</taxon>
        <taxon>Gammaproteobacteria</taxon>
        <taxon>Enterobacterales</taxon>
        <taxon>Erwiniaceae</taxon>
        <taxon>Buchnera</taxon>
    </lineage>
</organism>
<comment type="function">
    <text evidence="1">Catalyzes the oxidation of glucose 6-phosphate to 6-phosphogluconolactone.</text>
</comment>
<comment type="catalytic activity">
    <reaction evidence="1">
        <text>D-glucose 6-phosphate + NADP(+) = 6-phospho-D-glucono-1,5-lactone + NADPH + H(+)</text>
        <dbReference type="Rhea" id="RHEA:15841"/>
        <dbReference type="ChEBI" id="CHEBI:15378"/>
        <dbReference type="ChEBI" id="CHEBI:57783"/>
        <dbReference type="ChEBI" id="CHEBI:57955"/>
        <dbReference type="ChEBI" id="CHEBI:58349"/>
        <dbReference type="ChEBI" id="CHEBI:61548"/>
        <dbReference type="EC" id="1.1.1.49"/>
    </reaction>
</comment>
<comment type="pathway">
    <text evidence="1">Carbohydrate degradation; pentose phosphate pathway; D-ribulose 5-phosphate from D-glucose 6-phosphate (oxidative stage): step 1/3.</text>
</comment>
<comment type="similarity">
    <text evidence="1">Belongs to the glucose-6-phosphate dehydrogenase family.</text>
</comment>
<sequence>MIIETNQACDLVIFGTKGDLARRKLLPALYKLEKSQKIHPDTRIIGTGRADWNTEDYIKIVKKAIKMFLNEKIDEKIWKKLRSRLNFFYIDVFQDLHFLELKNILNQKKNIIIYYCAVPSNTFNAIFTGLGKVNLNSFPSRIIIEKPLGVSLETSKKINNQIAKYFLESQIFRIDHYLGKESILNLLALRFSNSFFFHSWNNKIIDHIQITVSEEVGIENRWNYFDQMGQTRDMVQNHLLQILTIVSMDKPKNITPEGIRDEKLKILRSLKKIDLNEIHIKTARGQYASGIINGKKVPSYIEENGANKHSKTETFVSIKVDINNDRWFGVPFYLRTGKRLAYKYSEIVIVFKKISKNLFQEFNKNLSPNKLIIRLEPNESIKIYFLNKVPGLSKEYKLKSDKMEFNFNINNTKNFVDAYERLLFESMRGIQSLFVCREEVEEAWKWIDPIINGWKKTNINTVQLYKSGTWGPKSSDEIIMRDGRFWETFN</sequence>
<evidence type="ECO:0000255" key="1">
    <source>
        <dbReference type="HAMAP-Rule" id="MF_00966"/>
    </source>
</evidence>
<reference key="1">
    <citation type="journal article" date="2002" name="Science">
        <title>50 million years of genomic stasis in endosymbiotic bacteria.</title>
        <authorList>
            <person name="Tamas I."/>
            <person name="Klasson L."/>
            <person name="Canbaeck B."/>
            <person name="Naeslund A.K."/>
            <person name="Eriksson A.-S."/>
            <person name="Wernegreen J.J."/>
            <person name="Sandstroem J.P."/>
            <person name="Moran N.A."/>
            <person name="Andersson S.G.E."/>
        </authorList>
    </citation>
    <scope>NUCLEOTIDE SEQUENCE [LARGE SCALE GENOMIC DNA]</scope>
    <source>
        <strain>Sg</strain>
    </source>
</reference>
<proteinExistence type="inferred from homology"/>
<dbReference type="EC" id="1.1.1.49" evidence="1"/>
<dbReference type="EMBL" id="AE013218">
    <property type="protein sequence ID" value="AAM67866.1"/>
    <property type="molecule type" value="Genomic_DNA"/>
</dbReference>
<dbReference type="RefSeq" id="WP_011053833.1">
    <property type="nucleotide sequence ID" value="NC_004061.1"/>
</dbReference>
<dbReference type="SMR" id="Q8K9M2"/>
<dbReference type="STRING" id="198804.BUsg_312"/>
<dbReference type="GeneID" id="93003781"/>
<dbReference type="KEGG" id="bas:BUsg_312"/>
<dbReference type="eggNOG" id="COG0364">
    <property type="taxonomic scope" value="Bacteria"/>
</dbReference>
<dbReference type="HOGENOM" id="CLU_013524_5_0_6"/>
<dbReference type="UniPathway" id="UPA00115">
    <property type="reaction ID" value="UER00408"/>
</dbReference>
<dbReference type="Proteomes" id="UP000000416">
    <property type="component" value="Chromosome"/>
</dbReference>
<dbReference type="GO" id="GO:0005829">
    <property type="term" value="C:cytosol"/>
    <property type="evidence" value="ECO:0007669"/>
    <property type="project" value="TreeGrafter"/>
</dbReference>
<dbReference type="GO" id="GO:0004345">
    <property type="term" value="F:glucose-6-phosphate dehydrogenase activity"/>
    <property type="evidence" value="ECO:0007669"/>
    <property type="project" value="UniProtKB-UniRule"/>
</dbReference>
<dbReference type="GO" id="GO:0050661">
    <property type="term" value="F:NADP binding"/>
    <property type="evidence" value="ECO:0007669"/>
    <property type="project" value="UniProtKB-UniRule"/>
</dbReference>
<dbReference type="GO" id="GO:0006006">
    <property type="term" value="P:glucose metabolic process"/>
    <property type="evidence" value="ECO:0007669"/>
    <property type="project" value="UniProtKB-KW"/>
</dbReference>
<dbReference type="GO" id="GO:0009051">
    <property type="term" value="P:pentose-phosphate shunt, oxidative branch"/>
    <property type="evidence" value="ECO:0007669"/>
    <property type="project" value="TreeGrafter"/>
</dbReference>
<dbReference type="Gene3D" id="3.30.360.10">
    <property type="entry name" value="Dihydrodipicolinate Reductase, domain 2"/>
    <property type="match status" value="1"/>
</dbReference>
<dbReference type="Gene3D" id="3.40.50.720">
    <property type="entry name" value="NAD(P)-binding Rossmann-like Domain"/>
    <property type="match status" value="1"/>
</dbReference>
<dbReference type="HAMAP" id="MF_00966">
    <property type="entry name" value="G6PD"/>
    <property type="match status" value="1"/>
</dbReference>
<dbReference type="InterPro" id="IPR001282">
    <property type="entry name" value="G6P_DH"/>
</dbReference>
<dbReference type="InterPro" id="IPR019796">
    <property type="entry name" value="G6P_DH_AS"/>
</dbReference>
<dbReference type="InterPro" id="IPR022675">
    <property type="entry name" value="G6P_DH_C"/>
</dbReference>
<dbReference type="InterPro" id="IPR022674">
    <property type="entry name" value="G6P_DH_NAD-bd"/>
</dbReference>
<dbReference type="InterPro" id="IPR036291">
    <property type="entry name" value="NAD(P)-bd_dom_sf"/>
</dbReference>
<dbReference type="NCBIfam" id="TIGR00871">
    <property type="entry name" value="zwf"/>
    <property type="match status" value="1"/>
</dbReference>
<dbReference type="PANTHER" id="PTHR23429:SF0">
    <property type="entry name" value="GLUCOSE-6-PHOSPHATE 1-DEHYDROGENASE"/>
    <property type="match status" value="1"/>
</dbReference>
<dbReference type="PANTHER" id="PTHR23429">
    <property type="entry name" value="GLUCOSE-6-PHOSPHATE 1-DEHYDROGENASE G6PD"/>
    <property type="match status" value="1"/>
</dbReference>
<dbReference type="Pfam" id="PF02781">
    <property type="entry name" value="G6PD_C"/>
    <property type="match status" value="1"/>
</dbReference>
<dbReference type="Pfam" id="PF00479">
    <property type="entry name" value="G6PD_N"/>
    <property type="match status" value="1"/>
</dbReference>
<dbReference type="PIRSF" id="PIRSF000110">
    <property type="entry name" value="G6PD"/>
    <property type="match status" value="1"/>
</dbReference>
<dbReference type="PRINTS" id="PR00079">
    <property type="entry name" value="G6PDHDRGNASE"/>
</dbReference>
<dbReference type="SUPFAM" id="SSF55347">
    <property type="entry name" value="Glyceraldehyde-3-phosphate dehydrogenase-like, C-terminal domain"/>
    <property type="match status" value="1"/>
</dbReference>
<dbReference type="SUPFAM" id="SSF51735">
    <property type="entry name" value="NAD(P)-binding Rossmann-fold domains"/>
    <property type="match status" value="1"/>
</dbReference>
<dbReference type="PROSITE" id="PS00069">
    <property type="entry name" value="G6P_DEHYDROGENASE"/>
    <property type="match status" value="1"/>
</dbReference>
<feature type="chain" id="PRO_0000068113" description="Glucose-6-phosphate 1-dehydrogenase">
    <location>
        <begin position="1"/>
        <end position="490"/>
    </location>
</feature>
<feature type="active site" description="Proton acceptor" evidence="1">
    <location>
        <position position="238"/>
    </location>
</feature>
<feature type="binding site" evidence="1">
    <location>
        <position position="49"/>
    </location>
    <ligand>
        <name>NADP(+)</name>
        <dbReference type="ChEBI" id="CHEBI:58349"/>
    </ligand>
</feature>
<feature type="binding site" evidence="1">
    <location>
        <begin position="91"/>
        <end position="92"/>
    </location>
    <ligand>
        <name>NADP(+)</name>
        <dbReference type="ChEBI" id="CHEBI:58349"/>
    </ligand>
</feature>
<feature type="binding site" evidence="1">
    <location>
        <position position="146"/>
    </location>
    <ligand>
        <name>NADP(+)</name>
        <dbReference type="ChEBI" id="CHEBI:58349"/>
    </ligand>
</feature>
<feature type="binding site" evidence="1">
    <location>
        <position position="176"/>
    </location>
    <ligand>
        <name>substrate</name>
    </ligand>
</feature>
<feature type="binding site" evidence="1">
    <location>
        <position position="180"/>
    </location>
    <ligand>
        <name>substrate</name>
    </ligand>
</feature>
<feature type="binding site" evidence="1">
    <location>
        <position position="214"/>
    </location>
    <ligand>
        <name>substrate</name>
    </ligand>
</feature>
<feature type="binding site" evidence="1">
    <location>
        <position position="233"/>
    </location>
    <ligand>
        <name>substrate</name>
    </ligand>
</feature>
<feature type="binding site" evidence="1">
    <location>
        <position position="338"/>
    </location>
    <ligand>
        <name>substrate</name>
    </ligand>
</feature>
<feature type="binding site" evidence="1">
    <location>
        <position position="343"/>
    </location>
    <ligand>
        <name>substrate</name>
    </ligand>
</feature>
<gene>
    <name evidence="1" type="primary">zwf</name>
    <name type="ordered locus">BUsg_312</name>
</gene>
<keyword id="KW-0119">Carbohydrate metabolism</keyword>
<keyword id="KW-0313">Glucose metabolism</keyword>
<keyword id="KW-0521">NADP</keyword>
<keyword id="KW-0560">Oxidoreductase</keyword>